<evidence type="ECO:0000255" key="1">
    <source>
        <dbReference type="HAMAP-Rule" id="MF_04072"/>
    </source>
</evidence>
<evidence type="ECO:0000305" key="2"/>
<reference key="1">
    <citation type="journal article" date="1998" name="Lancet">
        <title>Human influenza A H5N1 virus related to a highly pathogenic avian influenza virus.</title>
        <authorList>
            <person name="Claas E.C.J."/>
            <person name="Osterhaus A.D."/>
            <person name="van Beek R."/>
            <person name="De Jong J.C."/>
            <person name="Rimmelzwaan G.F."/>
            <person name="Senne D.A."/>
            <person name="Krauss S."/>
            <person name="Shortridge K.F."/>
            <person name="Webster R.G."/>
        </authorList>
    </citation>
    <scope>NUCLEOTIDE SEQUENCE [MRNA]</scope>
</reference>
<reference key="2">
    <citation type="journal article" date="1998" name="J. Virol.">
        <title>Comparisons of highly virulent H5N1 influenza A viruses isolated from humans and chickens from Hong Kong.</title>
        <authorList>
            <person name="Suarez D.L."/>
            <person name="Perdue M.L."/>
            <person name="Cox N."/>
            <person name="Rowe T."/>
            <person name="Bender C."/>
            <person name="Huang J."/>
            <person name="Swayne D.E."/>
        </authorList>
    </citation>
    <scope>NUCLEOTIDE SEQUENCE [GENOMIC RNA]</scope>
</reference>
<reference key="3">
    <citation type="journal article" date="1998" name="Science">
        <title>Characterization of an avian influenza A (H5N1) virus isolated from a child with a fatal respiratory illness.</title>
        <authorList>
            <person name="Subbarao K."/>
            <person name="Klimov A."/>
            <person name="Katz J."/>
            <person name="Regnery H."/>
            <person name="Lim W."/>
            <person name="Hall H."/>
            <person name="Perdue M."/>
            <person name="Swayne D."/>
            <person name="Bender C."/>
            <person name="Huang J."/>
            <person name="Hemphill M."/>
            <person name="Rowe T."/>
            <person name="Shaw M."/>
            <person name="Xu X."/>
            <person name="Fukuda K."/>
            <person name="Cox N."/>
        </authorList>
    </citation>
    <scope>NUCLEOTIDE SEQUENCE [GENOMIC RNA] OF 17-568</scope>
</reference>
<protein>
    <recommendedName>
        <fullName evidence="1">Hemagglutinin</fullName>
    </recommendedName>
    <component>
        <recommendedName>
            <fullName evidence="1">Hemagglutinin HA1 chain</fullName>
        </recommendedName>
    </component>
    <component>
        <recommendedName>
            <fullName evidence="1">Hemagglutinin HA2 chain</fullName>
        </recommendedName>
    </component>
</protein>
<gene>
    <name evidence="1" type="primary">HA</name>
</gene>
<keyword id="KW-1167">Clathrin- and caveolin-independent endocytosis of virus by host</keyword>
<keyword id="KW-1165">Clathrin-mediated endocytosis of virus by host</keyword>
<keyword id="KW-1015">Disulfide bond</keyword>
<keyword id="KW-1170">Fusion of virus membrane with host endosomal membrane</keyword>
<keyword id="KW-1168">Fusion of virus membrane with host membrane</keyword>
<keyword id="KW-0325">Glycoprotein</keyword>
<keyword id="KW-0348">Hemagglutinin</keyword>
<keyword id="KW-1032">Host cell membrane</keyword>
<keyword id="KW-1043">Host membrane</keyword>
<keyword id="KW-0945">Host-virus interaction</keyword>
<keyword id="KW-0449">Lipoprotein</keyword>
<keyword id="KW-0472">Membrane</keyword>
<keyword id="KW-0564">Palmitate</keyword>
<keyword id="KW-0732">Signal</keyword>
<keyword id="KW-0812">Transmembrane</keyword>
<keyword id="KW-1133">Transmembrane helix</keyword>
<keyword id="KW-1161">Viral attachment to host cell</keyword>
<keyword id="KW-0261">Viral envelope protein</keyword>
<keyword id="KW-1162">Viral penetration into host cytoplasm</keyword>
<keyword id="KW-0946">Virion</keyword>
<keyword id="KW-1164">Virus endocytosis by host</keyword>
<keyword id="KW-1160">Virus entry into host cell</keyword>
<comment type="function">
    <text>Binds to sialic acid-containing receptors on the cell surface, bringing about the attachment of the virus particle to the cell. This attachment induces virion internalization of about two third of the virus particles through clathrin-dependent endocytosis and about one third through a clathrin- and caveolin-independent pathway. Plays a major role in the determination of host range restriction and virulence. Class I viral fusion protein. Responsible for penetration of the virus into the cell cytoplasm by mediating the fusion of the membrane of the endocytosed virus particle with the endosomal membrane. Low pH in endosomes induces an irreversible conformational change in HA2, releasing the fusion hydrophobic speptide. Several trimers are required to form a competent fusion pore.</text>
</comment>
<comment type="function">
    <text evidence="1">Binds to sialic acid-containing receptors on the cell surface, bringing about the attachment of the virus particle to the cell. This attachment induces virion internalization either through clathrin-dependent endocytosis or through clathrin- and caveolin-independent pathway. Plays a major role in the determination of host range restriction and virulence. Class I viral fusion protein. Responsible for penetration of the virus into the cell cytoplasm by mediating the fusion of the membrane of the endocytosed virus particle with the endosomal membrane. Low pH in endosomes induces an irreversible conformational change in HA2, releasing the fusion hydrophobic peptide. Several trimers are required to form a competent fusion pore.</text>
</comment>
<comment type="subunit">
    <text evidence="1">Homotrimer of disulfide-linked HA1-HA2.</text>
</comment>
<comment type="subcellular location">
    <subcellularLocation>
        <location evidence="1">Virion membrane</location>
        <topology evidence="1">Single-pass type I membrane protein</topology>
    </subcellularLocation>
    <subcellularLocation>
        <location evidence="1">Host apical cell membrane</location>
        <topology evidence="1">Single-pass type I membrane protein</topology>
    </subcellularLocation>
    <text evidence="1">Targeted to the apical plasma membrane in epithelial polarized cells through a signal present in the transmembrane domain. Associated with glycosphingolipid- and cholesterol-enriched detergent-resistant lipid rafts.</text>
</comment>
<comment type="PTM">
    <text evidence="1">Palmitoylated.</text>
</comment>
<comment type="PTM">
    <text evidence="1">In natural infection, inactive HA is matured into HA1 and HA2 outside the cell by one or more trypsin-like, arginine-specific endoprotease secreted by the bronchial epithelial cells. One identified protease that may be involved in this process is secreted in lungs by club cells.</text>
</comment>
<comment type="miscellaneous">
    <text>Major glycoprotein, comprises over 80% of the envelope proteins present in virus particle.</text>
</comment>
<comment type="miscellaneous">
    <text>The extent of infection into host organism is determined by HA. Influenza viruses bud from the apical surface of polarized epithelial cells (e.g. bronchial epithelial cells) into lumen of lungs and are therefore usually pneumotropic. The reason is that HA is cleaved by tryptase clara which is restricted to lungs. However, HAs of H5 and H7 pantropic avian viruses subtypes can be cleaved by furin and subtilisin-type enzymes, allowing the virus to grow in other organs than lungs.</text>
</comment>
<comment type="miscellaneous">
    <text evidence="2">The influenza A genome consist of 8 RNA segments. Genetic variation of hemagglutinin and/or neuraminidase genes results in the emergence of new influenza strains. The mechanism of variation can be the result of point mutations or the result of genetic reassortment between segments of two different strains.</text>
</comment>
<comment type="similarity">
    <text evidence="1">Belongs to the influenza viruses hemagglutinin family.</text>
</comment>
<sequence>MEKTVLLLATVSLVKSDQICIGYHANNSTEQVDTIMEKNVTVTHAQDILERTHNGKLCDLNGVKPLILRDCSVAGWLLGNPMCDEFINVPEWSYIVEKASPANDLCYPGNFNDYEELKHLLSRINHFEKIQIIPKSSWSNHDASSGVSSACPYLGRSSFFRNVVWLIKKNSAYPTIKRSYNNTNQEDLLVLWGIHHPNDAAEQTKLYQNPTTYISVGTSTLNQRLVPEIATRPKVNGQSGRMEFFWTILKPNDAINFESNGNFIAPEYAYKIVKKGDSTIMKSELEYGNCNTKCQTPMGAINSSMPFHNIHPLTIGECPKYVKSNRLVLATGLRNTPQRERRRKKRGLFGAIAGFIEGGWQGMVDGWYGYHHSNEQGSGYAADKESTQKAIDGVTNKVNSIINKMNTQFEAVGREFNNLERRIENLNKKMEDGFLDVWTYNAELLVLMENERTLDFHDSNVKNLYDKVRLQLRDNAKELGNGCFEFYHKCDNECMESVKNGTYDYPQYSEEARLNREEISGVKLESMGTYQILSIYSTVASSLALAIMVAGLSLWMCSNGSLQCRICI</sequence>
<proteinExistence type="evidence at transcript level"/>
<dbReference type="EMBL" id="AF028709">
    <property type="protein sequence ID" value="AAC40508.1"/>
    <property type="molecule type" value="mRNA"/>
</dbReference>
<dbReference type="EMBL" id="AF046088">
    <property type="protein sequence ID" value="AAC32088.1"/>
    <property type="molecule type" value="Genomic_RNA"/>
</dbReference>
<dbReference type="EMBL" id="AF036356">
    <property type="protein sequence ID" value="AAC34263.1"/>
    <property type="molecule type" value="Genomic_RNA"/>
</dbReference>
<dbReference type="SMR" id="O56140"/>
<dbReference type="GlyCosmos" id="O56140">
    <property type="glycosylation" value="6 sites, No reported glycans"/>
</dbReference>
<dbReference type="Proteomes" id="UP000008587">
    <property type="component" value="Genome"/>
</dbReference>
<dbReference type="GO" id="GO:0020002">
    <property type="term" value="C:host cell plasma membrane"/>
    <property type="evidence" value="ECO:0007669"/>
    <property type="project" value="UniProtKB-SubCell"/>
</dbReference>
<dbReference type="GO" id="GO:0016020">
    <property type="term" value="C:membrane"/>
    <property type="evidence" value="ECO:0007669"/>
    <property type="project" value="UniProtKB-UniRule"/>
</dbReference>
<dbReference type="GO" id="GO:0019031">
    <property type="term" value="C:viral envelope"/>
    <property type="evidence" value="ECO:0007669"/>
    <property type="project" value="UniProtKB-UniRule"/>
</dbReference>
<dbReference type="GO" id="GO:0055036">
    <property type="term" value="C:virion membrane"/>
    <property type="evidence" value="ECO:0007669"/>
    <property type="project" value="UniProtKB-SubCell"/>
</dbReference>
<dbReference type="GO" id="GO:0046789">
    <property type="term" value="F:host cell surface receptor binding"/>
    <property type="evidence" value="ECO:0007669"/>
    <property type="project" value="UniProtKB-UniRule"/>
</dbReference>
<dbReference type="GO" id="GO:0075512">
    <property type="term" value="P:clathrin-dependent endocytosis of virus by host cell"/>
    <property type="evidence" value="ECO:0007669"/>
    <property type="project" value="UniProtKB-UniRule"/>
</dbReference>
<dbReference type="GO" id="GO:0039654">
    <property type="term" value="P:fusion of virus membrane with host endosome membrane"/>
    <property type="evidence" value="ECO:0007669"/>
    <property type="project" value="UniProtKB-UniRule"/>
</dbReference>
<dbReference type="GO" id="GO:0019064">
    <property type="term" value="P:fusion of virus membrane with host plasma membrane"/>
    <property type="evidence" value="ECO:0007669"/>
    <property type="project" value="InterPro"/>
</dbReference>
<dbReference type="GO" id="GO:0046761">
    <property type="term" value="P:viral budding from plasma membrane"/>
    <property type="evidence" value="ECO:0007669"/>
    <property type="project" value="UniProtKB-UniRule"/>
</dbReference>
<dbReference type="GO" id="GO:0019062">
    <property type="term" value="P:virion attachment to host cell"/>
    <property type="evidence" value="ECO:0007669"/>
    <property type="project" value="UniProtKB-KW"/>
</dbReference>
<dbReference type="FunFam" id="3.90.209.20:FF:000001">
    <property type="entry name" value="Hemagglutinin"/>
    <property type="match status" value="1"/>
</dbReference>
<dbReference type="Gene3D" id="3.90.20.10">
    <property type="match status" value="1"/>
</dbReference>
<dbReference type="Gene3D" id="3.90.209.20">
    <property type="match status" value="1"/>
</dbReference>
<dbReference type="Gene3D" id="2.10.77.10">
    <property type="entry name" value="Hemagglutinin Chain A, Domain 2"/>
    <property type="match status" value="1"/>
</dbReference>
<dbReference type="HAMAP" id="MF_04072">
    <property type="entry name" value="INFV_HEMA"/>
    <property type="match status" value="1"/>
</dbReference>
<dbReference type="InterPro" id="IPR008980">
    <property type="entry name" value="Capsid_hemagglutn"/>
</dbReference>
<dbReference type="InterPro" id="IPR013828">
    <property type="entry name" value="Hemagglutn_HA1_a/b_dom_sf"/>
</dbReference>
<dbReference type="InterPro" id="IPR000149">
    <property type="entry name" value="Hemagglutn_influenz_A"/>
</dbReference>
<dbReference type="InterPro" id="IPR001364">
    <property type="entry name" value="Hemagglutn_influenz_A/B"/>
</dbReference>
<dbReference type="Pfam" id="PF00509">
    <property type="entry name" value="Hemagglutinin"/>
    <property type="match status" value="1"/>
</dbReference>
<dbReference type="PRINTS" id="PR00330">
    <property type="entry name" value="HEMAGGLUTN1"/>
</dbReference>
<dbReference type="PRINTS" id="PR00329">
    <property type="entry name" value="HEMAGGLUTN12"/>
</dbReference>
<dbReference type="SUPFAM" id="SSF58064">
    <property type="entry name" value="Influenza hemagglutinin (stalk)"/>
    <property type="match status" value="1"/>
</dbReference>
<dbReference type="SUPFAM" id="SSF49818">
    <property type="entry name" value="Viral protein domain"/>
    <property type="match status" value="1"/>
</dbReference>
<feature type="signal peptide" evidence="1">
    <location>
        <begin position="1"/>
        <end position="16"/>
    </location>
</feature>
<feature type="chain" id="PRO_0000440542" description="Hemagglutinin" evidence="1">
    <location>
        <begin position="17"/>
        <end position="568"/>
    </location>
</feature>
<feature type="chain" id="PRO_0000440543" description="Hemagglutinin HA1 chain" evidence="1">
    <location>
        <begin position="17"/>
        <end position="345"/>
    </location>
</feature>
<feature type="chain" id="PRO_0000043413" description="Hemagglutinin HA2 chain" evidence="1">
    <location>
        <begin position="347"/>
        <end position="568"/>
    </location>
</feature>
<feature type="topological domain" description="Extracellular" evidence="1">
    <location>
        <begin position="17"/>
        <end position="531"/>
    </location>
</feature>
<feature type="transmembrane region" description="Helical" evidence="1">
    <location>
        <begin position="532"/>
        <end position="552"/>
    </location>
</feature>
<feature type="topological domain" description="Cytoplasmic" evidence="1">
    <location>
        <begin position="553"/>
        <end position="568"/>
    </location>
</feature>
<feature type="site" description="Cleavage; by host" evidence="1">
    <location>
        <begin position="346"/>
        <end position="347"/>
    </location>
</feature>
<feature type="lipid moiety-binding region" description="S-palmitoyl cysteine; by host" evidence="1">
    <location>
        <position position="557"/>
    </location>
</feature>
<feature type="lipid moiety-binding region" description="S-palmitoyl cysteine; by host" evidence="1">
    <location>
        <position position="564"/>
    </location>
</feature>
<feature type="lipid moiety-binding region" description="S-palmitoyl cysteine; by host" evidence="1">
    <location>
        <position position="567"/>
    </location>
</feature>
<feature type="glycosylation site" description="N-linked (GlcNAc...) asparagine; by host" evidence="1">
    <location>
        <position position="26"/>
    </location>
</feature>
<feature type="glycosylation site" description="N-linked (GlcNAc...) asparagine; by host" evidence="1">
    <location>
        <position position="27"/>
    </location>
</feature>
<feature type="glycosylation site" description="N-linked (GlcNAc...) asparagine; by host" evidence="1">
    <location>
        <position position="39"/>
    </location>
</feature>
<feature type="glycosylation site" description="N-linked (GlcNAc...) asparagine; by host" evidence="1">
    <location>
        <position position="181"/>
    </location>
</feature>
<feature type="glycosylation site" description="N-linked (GlcNAc...) asparagine; by host" evidence="1">
    <location>
        <position position="302"/>
    </location>
</feature>
<feature type="glycosylation site" description="N-linked (GlcNAc...) asparagine; by host" evidence="1">
    <location>
        <position position="500"/>
    </location>
</feature>
<feature type="disulfide bond" description="Interchain (between HA1 and HA2 chains)" evidence="1">
    <location>
        <begin position="20"/>
        <end position="483"/>
    </location>
</feature>
<feature type="disulfide bond" evidence="1">
    <location>
        <begin position="58"/>
        <end position="290"/>
    </location>
</feature>
<feature type="disulfide bond" evidence="1">
    <location>
        <begin position="71"/>
        <end position="83"/>
    </location>
</feature>
<feature type="disulfide bond" evidence="1">
    <location>
        <begin position="106"/>
        <end position="151"/>
    </location>
</feature>
<feature type="disulfide bond" evidence="1">
    <location>
        <begin position="294"/>
        <end position="318"/>
    </location>
</feature>
<feature type="disulfide bond" evidence="1">
    <location>
        <begin position="490"/>
        <end position="494"/>
    </location>
</feature>
<feature type="sequence conflict" description="In Ref. 1; AAC40508." evidence="2" ref="1">
    <original>K</original>
    <variation>R</variation>
    <location>
        <position position="3"/>
    </location>
</feature>
<feature type="sequence conflict" description="In Ref. 1; AAC40508." evidence="2" ref="1">
    <original>I</original>
    <variation>V</variation>
    <location>
        <position position="194"/>
    </location>
</feature>
<feature type="sequence conflict" description="In Ref. 1; AAC40508." evidence="2" ref="1">
    <original>GYA</original>
    <variation>CYS</variation>
    <location>
        <begin position="379"/>
        <end position="381"/>
    </location>
</feature>
<organismHost>
    <name type="scientific">Aves</name>
    <dbReference type="NCBI Taxonomy" id="8782"/>
</organismHost>
<organismHost>
    <name type="scientific">Felis catus</name>
    <name type="common">Cat</name>
    <name type="synonym">Felis silvestris catus</name>
    <dbReference type="NCBI Taxonomy" id="9685"/>
</organismHost>
<organismHost>
    <name type="scientific">Homo sapiens</name>
    <name type="common">Human</name>
    <dbReference type="NCBI Taxonomy" id="9606"/>
</organismHost>
<organismHost>
    <name type="scientific">Panthera pardus</name>
    <name type="common">Leopard</name>
    <name type="synonym">Felis pardus</name>
    <dbReference type="NCBI Taxonomy" id="9691"/>
</organismHost>
<organismHost>
    <name type="scientific">Panthera tigris</name>
    <name type="common">Tiger</name>
    <dbReference type="NCBI Taxonomy" id="9694"/>
</organismHost>
<organismHost>
    <name type="scientific">Sus scrofa</name>
    <name type="common">Pig</name>
    <dbReference type="NCBI Taxonomy" id="9823"/>
</organismHost>
<name>HEMA_I97A1</name>
<organism>
    <name type="scientific">Influenza A virus (strain A/Hong Kong/156/1997 H5N1 genotype Gs/Gd)</name>
    <dbReference type="NCBI Taxonomy" id="130763"/>
    <lineage>
        <taxon>Viruses</taxon>
        <taxon>Riboviria</taxon>
        <taxon>Orthornavirae</taxon>
        <taxon>Negarnaviricota</taxon>
        <taxon>Polyploviricotina</taxon>
        <taxon>Insthoviricetes</taxon>
        <taxon>Articulavirales</taxon>
        <taxon>Orthomyxoviridae</taxon>
        <taxon>Alphainfluenzavirus</taxon>
        <taxon>Alphainfluenzavirus influenzae</taxon>
        <taxon>Influenza A virus</taxon>
    </lineage>
</organism>
<accession>O56140</accession>
<accession>O56262</accession>
<accession>Q9WAA0</accession>